<accession>Q8YET3</accession>
<organism>
    <name type="scientific">Brucella melitensis biotype 1 (strain ATCC 23456 / CCUG 17765 / NCTC 10094 / 16M)</name>
    <dbReference type="NCBI Taxonomy" id="224914"/>
    <lineage>
        <taxon>Bacteria</taxon>
        <taxon>Pseudomonadati</taxon>
        <taxon>Pseudomonadota</taxon>
        <taxon>Alphaproteobacteria</taxon>
        <taxon>Hyphomicrobiales</taxon>
        <taxon>Brucellaceae</taxon>
        <taxon>Brucella/Ochrobactrum group</taxon>
        <taxon>Brucella</taxon>
    </lineage>
</organism>
<protein>
    <recommendedName>
        <fullName>Integration host factor subunit beta</fullName>
        <shortName>IHF-beta</shortName>
    </recommendedName>
</protein>
<feature type="chain" id="PRO_0000105043" description="Integration host factor subunit beta">
    <location>
        <begin position="1"/>
        <end position="94"/>
    </location>
</feature>
<evidence type="ECO:0000250" key="1"/>
<evidence type="ECO:0000305" key="2"/>
<sequence>MIKSELVQIIASRNPHLFQRDVVNIVGAVFDEITNALAEGNRVELRGFGAFSVKNRPARSGRNPRTGETVDVEEKWVPFFKTGKKLRDRLNGAV</sequence>
<dbReference type="EMBL" id="AE008917">
    <property type="protein sequence ID" value="AAL52975.1"/>
    <property type="status" value="ALT_INIT"/>
    <property type="molecule type" value="Genomic_DNA"/>
</dbReference>
<dbReference type="PIR" id="AD3476">
    <property type="entry name" value="AD3476"/>
</dbReference>
<dbReference type="RefSeq" id="WP_004684679.1">
    <property type="nucleotide sequence ID" value="NZ_GG703778.1"/>
</dbReference>
<dbReference type="SMR" id="Q8YET3"/>
<dbReference type="GeneID" id="29594670"/>
<dbReference type="KEGG" id="bme:BMEI1794"/>
<dbReference type="KEGG" id="bmel:DK63_1693"/>
<dbReference type="PATRIC" id="fig|224914.52.peg.1788"/>
<dbReference type="eggNOG" id="COG0776">
    <property type="taxonomic scope" value="Bacteria"/>
</dbReference>
<dbReference type="Proteomes" id="UP000000419">
    <property type="component" value="Chromosome I"/>
</dbReference>
<dbReference type="GO" id="GO:0005694">
    <property type="term" value="C:chromosome"/>
    <property type="evidence" value="ECO:0007669"/>
    <property type="project" value="InterPro"/>
</dbReference>
<dbReference type="GO" id="GO:0005829">
    <property type="term" value="C:cytosol"/>
    <property type="evidence" value="ECO:0007669"/>
    <property type="project" value="TreeGrafter"/>
</dbReference>
<dbReference type="GO" id="GO:0003677">
    <property type="term" value="F:DNA binding"/>
    <property type="evidence" value="ECO:0007669"/>
    <property type="project" value="UniProtKB-UniRule"/>
</dbReference>
<dbReference type="GO" id="GO:0030527">
    <property type="term" value="F:structural constituent of chromatin"/>
    <property type="evidence" value="ECO:0007669"/>
    <property type="project" value="InterPro"/>
</dbReference>
<dbReference type="GO" id="GO:0006310">
    <property type="term" value="P:DNA recombination"/>
    <property type="evidence" value="ECO:0007669"/>
    <property type="project" value="UniProtKB-UniRule"/>
</dbReference>
<dbReference type="GO" id="GO:0006355">
    <property type="term" value="P:regulation of DNA-templated transcription"/>
    <property type="evidence" value="ECO:0007669"/>
    <property type="project" value="UniProtKB-UniRule"/>
</dbReference>
<dbReference type="GO" id="GO:0006417">
    <property type="term" value="P:regulation of translation"/>
    <property type="evidence" value="ECO:0007669"/>
    <property type="project" value="UniProtKB-UniRule"/>
</dbReference>
<dbReference type="CDD" id="cd13836">
    <property type="entry name" value="IHF_B"/>
    <property type="match status" value="1"/>
</dbReference>
<dbReference type="Gene3D" id="4.10.520.10">
    <property type="entry name" value="IHF-like DNA-binding proteins"/>
    <property type="match status" value="1"/>
</dbReference>
<dbReference type="HAMAP" id="MF_00381">
    <property type="entry name" value="IHF_beta"/>
    <property type="match status" value="1"/>
</dbReference>
<dbReference type="InterPro" id="IPR000119">
    <property type="entry name" value="Hist_DNA-bd"/>
</dbReference>
<dbReference type="InterPro" id="IPR020816">
    <property type="entry name" value="Histone-like_DNA-bd_CS"/>
</dbReference>
<dbReference type="InterPro" id="IPR010992">
    <property type="entry name" value="IHF-like_DNA-bd_dom_sf"/>
</dbReference>
<dbReference type="InterPro" id="IPR005685">
    <property type="entry name" value="IHF_beta"/>
</dbReference>
<dbReference type="NCBIfam" id="TIGR00988">
    <property type="entry name" value="hip"/>
    <property type="match status" value="1"/>
</dbReference>
<dbReference type="NCBIfam" id="NF001222">
    <property type="entry name" value="PRK00199.1"/>
    <property type="match status" value="1"/>
</dbReference>
<dbReference type="PANTHER" id="PTHR33175">
    <property type="entry name" value="DNA-BINDING PROTEIN HU"/>
    <property type="match status" value="1"/>
</dbReference>
<dbReference type="PANTHER" id="PTHR33175:SF5">
    <property type="entry name" value="INTEGRATION HOST FACTOR SUBUNIT BETA"/>
    <property type="match status" value="1"/>
</dbReference>
<dbReference type="Pfam" id="PF00216">
    <property type="entry name" value="Bac_DNA_binding"/>
    <property type="match status" value="1"/>
</dbReference>
<dbReference type="PRINTS" id="PR01727">
    <property type="entry name" value="DNABINDINGHU"/>
</dbReference>
<dbReference type="SMART" id="SM00411">
    <property type="entry name" value="BHL"/>
    <property type="match status" value="1"/>
</dbReference>
<dbReference type="SUPFAM" id="SSF47729">
    <property type="entry name" value="IHF-like DNA-binding proteins"/>
    <property type="match status" value="1"/>
</dbReference>
<dbReference type="PROSITE" id="PS00045">
    <property type="entry name" value="HISTONE_LIKE"/>
    <property type="match status" value="1"/>
</dbReference>
<proteinExistence type="inferred from homology"/>
<name>IHFB_BRUME</name>
<comment type="function">
    <text evidence="1">This protein is one of the two subunits of integration host factor, a specific DNA-binding protein that functions in genetic recombination as well as in transcriptional and translational control.</text>
</comment>
<comment type="subunit">
    <text evidence="1">Heterodimer of an alpha and a beta chain.</text>
</comment>
<comment type="similarity">
    <text evidence="2">Belongs to the bacterial histone-like protein family.</text>
</comment>
<comment type="sequence caution" evidence="2">
    <conflict type="erroneous initiation">
        <sequence resource="EMBL-CDS" id="AAL52975"/>
    </conflict>
</comment>
<reference key="1">
    <citation type="journal article" date="2002" name="Proc. Natl. Acad. Sci. U.S.A.">
        <title>The genome sequence of the facultative intracellular pathogen Brucella melitensis.</title>
        <authorList>
            <person name="DelVecchio V.G."/>
            <person name="Kapatral V."/>
            <person name="Redkar R.J."/>
            <person name="Patra G."/>
            <person name="Mujer C."/>
            <person name="Los T."/>
            <person name="Ivanova N."/>
            <person name="Anderson I."/>
            <person name="Bhattacharyya A."/>
            <person name="Lykidis A."/>
            <person name="Reznik G."/>
            <person name="Jablonski L."/>
            <person name="Larsen N."/>
            <person name="D'Souza M."/>
            <person name="Bernal A."/>
            <person name="Mazur M."/>
            <person name="Goltsman E."/>
            <person name="Selkov E."/>
            <person name="Elzer P.H."/>
            <person name="Hagius S."/>
            <person name="O'Callaghan D."/>
            <person name="Letesson J.-J."/>
            <person name="Haselkorn R."/>
            <person name="Kyrpides N.C."/>
            <person name="Overbeek R."/>
        </authorList>
    </citation>
    <scope>NUCLEOTIDE SEQUENCE [LARGE SCALE GENOMIC DNA]</scope>
    <source>
        <strain>ATCC 23456 / CCUG 17765 / NCTC 10094 / 16M</strain>
    </source>
</reference>
<keyword id="KW-0233">DNA recombination</keyword>
<keyword id="KW-0238">DNA-binding</keyword>
<keyword id="KW-0804">Transcription</keyword>
<keyword id="KW-0805">Transcription regulation</keyword>
<keyword id="KW-0810">Translation regulation</keyword>
<gene>
    <name type="primary">ihfB</name>
    <name type="synonym">himD</name>
    <name type="ordered locus">BMEI1794</name>
</gene>